<gene>
    <name evidence="1" type="primary">rimP</name>
    <name type="ordered locus">SYNW0601</name>
</gene>
<accession>Q7U8L5</accession>
<comment type="function">
    <text evidence="1">Required for maturation of 30S ribosomal subunits.</text>
</comment>
<comment type="subcellular location">
    <subcellularLocation>
        <location evidence="1">Cytoplasm</location>
    </subcellularLocation>
</comment>
<comment type="similarity">
    <text evidence="1">Belongs to the RimP family.</text>
</comment>
<comment type="sequence caution" evidence="2">
    <conflict type="erroneous initiation">
        <sequence resource="EMBL-CDS" id="CAE07116"/>
    </conflict>
</comment>
<dbReference type="EMBL" id="BX569690">
    <property type="protein sequence ID" value="CAE07116.1"/>
    <property type="status" value="ALT_INIT"/>
    <property type="molecule type" value="Genomic_DNA"/>
</dbReference>
<dbReference type="RefSeq" id="WP_083810651.1">
    <property type="nucleotide sequence ID" value="NC_005070.1"/>
</dbReference>
<dbReference type="SMR" id="Q7U8L5"/>
<dbReference type="STRING" id="84588.SYNW0601"/>
<dbReference type="KEGG" id="syw:SYNW0601"/>
<dbReference type="eggNOG" id="COG0779">
    <property type="taxonomic scope" value="Bacteria"/>
</dbReference>
<dbReference type="HOGENOM" id="CLU_070525_2_1_3"/>
<dbReference type="Proteomes" id="UP000001422">
    <property type="component" value="Chromosome"/>
</dbReference>
<dbReference type="GO" id="GO:0005829">
    <property type="term" value="C:cytosol"/>
    <property type="evidence" value="ECO:0007669"/>
    <property type="project" value="TreeGrafter"/>
</dbReference>
<dbReference type="GO" id="GO:0000028">
    <property type="term" value="P:ribosomal small subunit assembly"/>
    <property type="evidence" value="ECO:0007669"/>
    <property type="project" value="TreeGrafter"/>
</dbReference>
<dbReference type="GO" id="GO:0006412">
    <property type="term" value="P:translation"/>
    <property type="evidence" value="ECO:0007669"/>
    <property type="project" value="TreeGrafter"/>
</dbReference>
<dbReference type="Gene3D" id="3.30.300.70">
    <property type="entry name" value="RimP-like superfamily, N-terminal"/>
    <property type="match status" value="1"/>
</dbReference>
<dbReference type="HAMAP" id="MF_01077">
    <property type="entry name" value="RimP"/>
    <property type="match status" value="1"/>
</dbReference>
<dbReference type="InterPro" id="IPR003728">
    <property type="entry name" value="Ribosome_maturation_RimP"/>
</dbReference>
<dbReference type="InterPro" id="IPR036847">
    <property type="entry name" value="RimP_C_sf"/>
</dbReference>
<dbReference type="InterPro" id="IPR028989">
    <property type="entry name" value="RimP_N"/>
</dbReference>
<dbReference type="InterPro" id="IPR035956">
    <property type="entry name" value="RimP_N_sf"/>
</dbReference>
<dbReference type="NCBIfam" id="NF011227">
    <property type="entry name" value="PRK14634.1"/>
    <property type="match status" value="1"/>
</dbReference>
<dbReference type="PANTHER" id="PTHR33867">
    <property type="entry name" value="RIBOSOME MATURATION FACTOR RIMP"/>
    <property type="match status" value="1"/>
</dbReference>
<dbReference type="PANTHER" id="PTHR33867:SF1">
    <property type="entry name" value="RIBOSOME MATURATION FACTOR RIMP"/>
    <property type="match status" value="1"/>
</dbReference>
<dbReference type="Pfam" id="PF02576">
    <property type="entry name" value="RimP_N"/>
    <property type="match status" value="1"/>
</dbReference>
<dbReference type="SUPFAM" id="SSF74942">
    <property type="entry name" value="YhbC-like, C-terminal domain"/>
    <property type="match status" value="1"/>
</dbReference>
<dbReference type="SUPFAM" id="SSF75420">
    <property type="entry name" value="YhbC-like, N-terminal domain"/>
    <property type="match status" value="1"/>
</dbReference>
<proteinExistence type="inferred from homology"/>
<name>RIMP_PARMW</name>
<keyword id="KW-0963">Cytoplasm</keyword>
<keyword id="KW-0690">Ribosome biogenesis</keyword>
<reference key="1">
    <citation type="journal article" date="2003" name="Nature">
        <title>The genome of a motile marine Synechococcus.</title>
        <authorList>
            <person name="Palenik B."/>
            <person name="Brahamsha B."/>
            <person name="Larimer F.W."/>
            <person name="Land M.L."/>
            <person name="Hauser L."/>
            <person name="Chain P."/>
            <person name="Lamerdin J.E."/>
            <person name="Regala W."/>
            <person name="Allen E.E."/>
            <person name="McCarren J."/>
            <person name="Paulsen I.T."/>
            <person name="Dufresne A."/>
            <person name="Partensky F."/>
            <person name="Webb E.A."/>
            <person name="Waterbury J."/>
        </authorList>
    </citation>
    <scope>NUCLEOTIDE SEQUENCE [LARGE SCALE GENOMIC DNA]</scope>
    <source>
        <strain>WH8102</strain>
    </source>
</reference>
<protein>
    <recommendedName>
        <fullName evidence="1">Ribosome maturation factor RimP</fullName>
    </recommendedName>
</protein>
<sequence>MPHPLLPELETLATSVAADQGFELCGIQLLTHLAPMTLEVHIRRSNGVDVNMDDCAGFSGTLGEALESAQLLTEAYVLEISSPGIGETLSSDRDFQTFRGFPVEVVHRDRDDTEQRLEGLLLERDEDTLQINIRGRIKRLPRDHVLSVRLTSPGS</sequence>
<evidence type="ECO:0000255" key="1">
    <source>
        <dbReference type="HAMAP-Rule" id="MF_01077"/>
    </source>
</evidence>
<evidence type="ECO:0000305" key="2"/>
<organism>
    <name type="scientific">Parasynechococcus marenigrum (strain WH8102)</name>
    <dbReference type="NCBI Taxonomy" id="84588"/>
    <lineage>
        <taxon>Bacteria</taxon>
        <taxon>Bacillati</taxon>
        <taxon>Cyanobacteriota</taxon>
        <taxon>Cyanophyceae</taxon>
        <taxon>Synechococcales</taxon>
        <taxon>Prochlorococcaceae</taxon>
        <taxon>Parasynechococcus</taxon>
        <taxon>Parasynechococcus marenigrum</taxon>
    </lineage>
</organism>
<feature type="chain" id="PRO_0000181941" description="Ribosome maturation factor RimP">
    <location>
        <begin position="1"/>
        <end position="155"/>
    </location>
</feature>